<accession>Q67619</accession>
<gene>
    <name type="ORF">C2</name>
    <name type="ORF">L2</name>
</gene>
<proteinExistence type="inferred from homology"/>
<keyword id="KW-0010">Activator</keyword>
<keyword id="KW-0238">DNA-binding</keyword>
<keyword id="KW-1035">Host cytoplasm</keyword>
<keyword id="KW-1048">Host nucleus</keyword>
<keyword id="KW-0945">Host-virus interaction</keyword>
<keyword id="KW-1090">Inhibition of host innate immune response by virus</keyword>
<keyword id="KW-0479">Metal-binding</keyword>
<keyword id="KW-0597">Phosphoprotein</keyword>
<keyword id="KW-0941">Suppressor of RNA silencing</keyword>
<keyword id="KW-0899">Viral immunoevasion</keyword>
<keyword id="KW-0862">Zinc</keyword>
<keyword id="KW-0863">Zinc-finger</keyword>
<name>TRAP_TYCS2</name>
<comment type="function">
    <text evidence="1">Strong activator of the late viral genes promoters. Acts as a suppressor of RNA-mediated gene silencing, also known as post-transcriptional gene silencing (PTGS), a mechanism of plant viral defense that limits the accumulation of viral RNAs. TrAP suppresses the host RNA silencing by inhibiting adenosine kinase 2 (ADK2), a kinase involved in a general methylation pathway. Also suppresses the host basal defense by interacting with and inhibiting SNF1 kinase, a key regulator of cell metabolism implicated in innate antiviral defense. Determines pathogenicity (By similarity).</text>
</comment>
<comment type="subunit">
    <text evidence="1">Monomer. Homodimer. Homooligomer. Self-interaction correlates with nuclear localization and efficient activation of transcription. Monomers suppress local silencing by interacting with and inactivating host adenosine kinase 2 (ADK2) in the cytoplasm. Interacts with and inhibits host SNF1 kinase. Binds to ssDNA (By similarity).</text>
</comment>
<comment type="subcellular location">
    <subcellularLocation>
        <location evidence="1">Host nucleus</location>
    </subcellularLocation>
    <subcellularLocation>
        <location evidence="1">Host cytoplasm</location>
    </subcellularLocation>
    <text evidence="1">The phosphorylated form appears to accumulate almost exclusively in the nucleus, whereas the non-phosphorylated form is found in both nucleus and cytoplasm.</text>
</comment>
<comment type="domain">
    <text evidence="1">The zinc finger and the transactivation region are involved in PTGS suppression.</text>
</comment>
<comment type="PTM">
    <text evidence="1">Phosphorylated.</text>
</comment>
<comment type="similarity">
    <text evidence="2">Belongs to the geminiviridae transcriptional activator protein family.</text>
</comment>
<organism>
    <name type="scientific">Tomato yellow leaf curl Sardinia virus (isolate Spain-2)</name>
    <name type="common">TYLCSV</name>
    <dbReference type="NCBI Taxonomy" id="221538"/>
    <lineage>
        <taxon>Viruses</taxon>
        <taxon>Monodnaviria</taxon>
        <taxon>Shotokuvirae</taxon>
        <taxon>Cressdnaviricota</taxon>
        <taxon>Repensiviricetes</taxon>
        <taxon>Geplafuvirales</taxon>
        <taxon>Geminiviridae</taxon>
        <taxon>Begomovirus</taxon>
        <taxon>Tomato yellow leaf curl Sardinia virus</taxon>
    </lineage>
</organism>
<reference key="1">
    <citation type="submission" date="1994-01" db="EMBL/GenBank/DDBJ databases">
        <title>Characterization of a tomato yellow leaf curl virus isolated from southeast Spain (almeria).</title>
        <authorList>
            <person name="Reina J."/>
            <person name="Cuadrado-Gomez I.M."/>
            <person name="Jimenez J."/>
            <person name="Bejarano E.R."/>
        </authorList>
    </citation>
    <scope>NUCLEOTIDE SEQUENCE [GENOMIC DNA]</scope>
</reference>
<feature type="chain" id="PRO_0000323681" description="Transcriptional activator protein">
    <location>
        <begin position="1"/>
        <end position="135"/>
    </location>
</feature>
<feature type="zinc finger region" evidence="1">
    <location>
        <begin position="37"/>
        <end position="54"/>
    </location>
</feature>
<feature type="region of interest" description="Transactivation" evidence="1">
    <location>
        <begin position="120"/>
        <end position="135"/>
    </location>
</feature>
<feature type="short sequence motif" description="Nuclear localization signal" evidence="1">
    <location>
        <begin position="17"/>
        <end position="32"/>
    </location>
</feature>
<protein>
    <recommendedName>
        <fullName>Transcriptional activator protein</fullName>
        <shortName>TrAP</shortName>
    </recommendedName>
    <alternativeName>
        <fullName>Protein C2</fullName>
    </alternativeName>
    <alternativeName>
        <fullName>Protein L2</fullName>
    </alternativeName>
</protein>
<evidence type="ECO:0000250" key="1"/>
<evidence type="ECO:0000305" key="2"/>
<sequence length="135" mass="15691">MQSSSPSTSHCSQIPIKIQHHIAKKRQVRRRRVDLDCGCSYYIHLDCINHGFTHRGVHHCASSNEWRLYLRDNKSPIFHDNQTQPTTIQQQIQFTNISNQVQPQLEEGTGDSQMFSQLPHLDDLTVSDWSFFKSL</sequence>
<organismHost>
    <name type="scientific">Solanum lycopersicum</name>
    <name type="common">Tomato</name>
    <name type="synonym">Lycopersicon esculentum</name>
    <dbReference type="NCBI Taxonomy" id="4081"/>
</organismHost>
<dbReference type="EMBL" id="L27708">
    <property type="protein sequence ID" value="AAA47954.1"/>
    <property type="molecule type" value="Genomic_DNA"/>
</dbReference>
<dbReference type="SMR" id="Q67619"/>
<dbReference type="Proteomes" id="UP000008266">
    <property type="component" value="Genome"/>
</dbReference>
<dbReference type="GO" id="GO:0030430">
    <property type="term" value="C:host cell cytoplasm"/>
    <property type="evidence" value="ECO:0007669"/>
    <property type="project" value="UniProtKB-SubCell"/>
</dbReference>
<dbReference type="GO" id="GO:0042025">
    <property type="term" value="C:host cell nucleus"/>
    <property type="evidence" value="ECO:0007669"/>
    <property type="project" value="UniProtKB-SubCell"/>
</dbReference>
<dbReference type="GO" id="GO:0019028">
    <property type="term" value="C:viral capsid"/>
    <property type="evidence" value="ECO:0007669"/>
    <property type="project" value="InterPro"/>
</dbReference>
<dbReference type="GO" id="GO:0003677">
    <property type="term" value="F:DNA binding"/>
    <property type="evidence" value="ECO:0007669"/>
    <property type="project" value="UniProtKB-KW"/>
</dbReference>
<dbReference type="GO" id="GO:0005198">
    <property type="term" value="F:structural molecule activity"/>
    <property type="evidence" value="ECO:0007669"/>
    <property type="project" value="InterPro"/>
</dbReference>
<dbReference type="GO" id="GO:0008270">
    <property type="term" value="F:zinc ion binding"/>
    <property type="evidence" value="ECO:0007669"/>
    <property type="project" value="UniProtKB-KW"/>
</dbReference>
<dbReference type="GO" id="GO:0052170">
    <property type="term" value="P:symbiont-mediated suppression of host innate immune response"/>
    <property type="evidence" value="ECO:0007669"/>
    <property type="project" value="UniProtKB-KW"/>
</dbReference>
<dbReference type="InterPro" id="IPR000942">
    <property type="entry name" value="Gemini_AL2"/>
</dbReference>
<dbReference type="Pfam" id="PF01440">
    <property type="entry name" value="Gemini_AL2"/>
    <property type="match status" value="1"/>
</dbReference>
<dbReference type="PRINTS" id="PR00230">
    <property type="entry name" value="GEMCOATAL2"/>
</dbReference>